<protein>
    <recommendedName>
        <fullName evidence="1">Glutamyl-tRNA(Gln) amidotransferase subunit A, chloroplastic/mitochondrial</fullName>
        <shortName evidence="1">Glu-AdT subunit A</shortName>
        <ecNumber evidence="1">6.3.5.7</ecNumber>
    </recommendedName>
</protein>
<organism>
    <name type="scientific">Arabidopsis thaliana</name>
    <name type="common">Mouse-ear cress</name>
    <dbReference type="NCBI Taxonomy" id="3702"/>
    <lineage>
        <taxon>Eukaryota</taxon>
        <taxon>Viridiplantae</taxon>
        <taxon>Streptophyta</taxon>
        <taxon>Embryophyta</taxon>
        <taxon>Tracheophyta</taxon>
        <taxon>Spermatophyta</taxon>
        <taxon>Magnoliopsida</taxon>
        <taxon>eudicotyledons</taxon>
        <taxon>Gunneridae</taxon>
        <taxon>Pentapetalae</taxon>
        <taxon>rosids</taxon>
        <taxon>malvids</taxon>
        <taxon>Brassicales</taxon>
        <taxon>Brassicaceae</taxon>
        <taxon>Camelineae</taxon>
        <taxon>Arabidopsis</taxon>
    </lineage>
</organism>
<feature type="chain" id="PRO_0000413340" description="Glutamyl-tRNA(Gln) amidotransferase subunit A, chloroplastic/mitochondrial">
    <location>
        <begin position="1"/>
        <end position="537"/>
    </location>
</feature>
<feature type="active site" description="Charge relay system" evidence="1">
    <location>
        <position position="116"/>
    </location>
</feature>
<feature type="active site" description="Charge relay system" evidence="1">
    <location>
        <position position="191"/>
    </location>
</feature>
<feature type="active site" description="Acyl-ester intermediate" evidence="1">
    <location>
        <position position="215"/>
    </location>
</feature>
<feature type="sequence conflict" description="In Ref. 1; AAG29095." evidence="3" ref="1">
    <original>Q</original>
    <variation>R</variation>
    <location>
        <position position="286"/>
    </location>
</feature>
<dbReference type="EC" id="6.3.5.7" evidence="1"/>
<dbReference type="EMBL" id="AF224745">
    <property type="protein sequence ID" value="AAG29095.1"/>
    <property type="molecule type" value="mRNA"/>
</dbReference>
<dbReference type="EMBL" id="AP001313">
    <property type="protein sequence ID" value="BAB03086.1"/>
    <property type="molecule type" value="Genomic_DNA"/>
</dbReference>
<dbReference type="EMBL" id="CP002686">
    <property type="protein sequence ID" value="AEE77048.1"/>
    <property type="molecule type" value="Genomic_DNA"/>
</dbReference>
<dbReference type="EMBL" id="AY045664">
    <property type="protein sequence ID" value="AAK74022.1"/>
    <property type="molecule type" value="mRNA"/>
</dbReference>
<dbReference type="EMBL" id="BT000644">
    <property type="protein sequence ID" value="AAN18210.1"/>
    <property type="molecule type" value="mRNA"/>
</dbReference>
<dbReference type="EMBL" id="AK226499">
    <property type="protein sequence ID" value="BAE98641.1"/>
    <property type="molecule type" value="mRNA"/>
</dbReference>
<dbReference type="RefSeq" id="NP_189194.1">
    <property type="nucleotide sequence ID" value="NM_113465.4"/>
</dbReference>
<dbReference type="SMR" id="Q9LI77"/>
<dbReference type="BioGRID" id="7485">
    <property type="interactions" value="3"/>
</dbReference>
<dbReference type="FunCoup" id="Q9LI77">
    <property type="interactions" value="2738"/>
</dbReference>
<dbReference type="STRING" id="3702.Q9LI77"/>
<dbReference type="iPTMnet" id="Q9LI77"/>
<dbReference type="PaxDb" id="3702-AT3G25660.1"/>
<dbReference type="ProteomicsDB" id="248608"/>
<dbReference type="EnsemblPlants" id="AT3G25660.1">
    <property type="protein sequence ID" value="AT3G25660.1"/>
    <property type="gene ID" value="AT3G25660"/>
</dbReference>
<dbReference type="GeneID" id="822154"/>
<dbReference type="Gramene" id="AT3G25660.1">
    <property type="protein sequence ID" value="AT3G25660.1"/>
    <property type="gene ID" value="AT3G25660"/>
</dbReference>
<dbReference type="KEGG" id="ath:AT3G25660"/>
<dbReference type="Araport" id="AT3G25660"/>
<dbReference type="TAIR" id="AT3G25660"/>
<dbReference type="eggNOG" id="KOG1211">
    <property type="taxonomic scope" value="Eukaryota"/>
</dbReference>
<dbReference type="HOGENOM" id="CLU_009600_0_3_1"/>
<dbReference type="InParanoid" id="Q9LI77"/>
<dbReference type="OMA" id="QPASYCG"/>
<dbReference type="PhylomeDB" id="Q9LI77"/>
<dbReference type="BioCyc" id="ARA:AT3G25660-MONOMER"/>
<dbReference type="PRO" id="PR:Q9LI77"/>
<dbReference type="Proteomes" id="UP000006548">
    <property type="component" value="Chromosome 3"/>
</dbReference>
<dbReference type="ExpressionAtlas" id="Q9LI77">
    <property type="expression patterns" value="baseline and differential"/>
</dbReference>
<dbReference type="GO" id="GO:0009507">
    <property type="term" value="C:chloroplast"/>
    <property type="evidence" value="ECO:0007005"/>
    <property type="project" value="TAIR"/>
</dbReference>
<dbReference type="GO" id="GO:0009570">
    <property type="term" value="C:chloroplast stroma"/>
    <property type="evidence" value="ECO:0007005"/>
    <property type="project" value="TAIR"/>
</dbReference>
<dbReference type="GO" id="GO:0030956">
    <property type="term" value="C:glutamyl-tRNA(Gln) amidotransferase complex"/>
    <property type="evidence" value="ECO:0007669"/>
    <property type="project" value="UniProtKB-UniRule"/>
</dbReference>
<dbReference type="GO" id="GO:0005739">
    <property type="term" value="C:mitochondrion"/>
    <property type="evidence" value="ECO:0007669"/>
    <property type="project" value="UniProtKB-SubCell"/>
</dbReference>
<dbReference type="GO" id="GO:0005524">
    <property type="term" value="F:ATP binding"/>
    <property type="evidence" value="ECO:0007669"/>
    <property type="project" value="UniProtKB-KW"/>
</dbReference>
<dbReference type="GO" id="GO:0050567">
    <property type="term" value="F:glutaminyl-tRNA synthase (glutamine-hydrolyzing) activity"/>
    <property type="evidence" value="ECO:0007669"/>
    <property type="project" value="UniProtKB-UniRule"/>
</dbReference>
<dbReference type="GO" id="GO:0016811">
    <property type="term" value="F:hydrolase activity, acting on carbon-nitrogen (but not peptide) bonds, in linear amides"/>
    <property type="evidence" value="ECO:0007669"/>
    <property type="project" value="UniProtKB-ARBA"/>
</dbReference>
<dbReference type="GO" id="GO:0070681">
    <property type="term" value="P:glutaminyl-tRNAGln biosynthesis via transamidation"/>
    <property type="evidence" value="ECO:0007669"/>
    <property type="project" value="UniProtKB-UniRule"/>
</dbReference>
<dbReference type="GO" id="GO:0032543">
    <property type="term" value="P:mitochondrial translation"/>
    <property type="evidence" value="ECO:0007669"/>
    <property type="project" value="UniProtKB-UniRule"/>
</dbReference>
<dbReference type="FunFam" id="3.90.1300.10:FF:000014">
    <property type="entry name" value="Glutamyl-tRNA(Gln) amidotransferase subunit A, chloroplastic/mitochondrial"/>
    <property type="match status" value="1"/>
</dbReference>
<dbReference type="Gene3D" id="3.90.1300.10">
    <property type="entry name" value="Amidase signature (AS) domain"/>
    <property type="match status" value="1"/>
</dbReference>
<dbReference type="HAMAP" id="MF_00120">
    <property type="entry name" value="GatA"/>
    <property type="match status" value="1"/>
</dbReference>
<dbReference type="InterPro" id="IPR000120">
    <property type="entry name" value="Amidase"/>
</dbReference>
<dbReference type="InterPro" id="IPR020556">
    <property type="entry name" value="Amidase_CS"/>
</dbReference>
<dbReference type="InterPro" id="IPR023631">
    <property type="entry name" value="Amidase_dom"/>
</dbReference>
<dbReference type="InterPro" id="IPR036928">
    <property type="entry name" value="AS_sf"/>
</dbReference>
<dbReference type="InterPro" id="IPR004412">
    <property type="entry name" value="GatA"/>
</dbReference>
<dbReference type="NCBIfam" id="TIGR00132">
    <property type="entry name" value="gatA"/>
    <property type="match status" value="1"/>
</dbReference>
<dbReference type="PANTHER" id="PTHR11895:SF7">
    <property type="entry name" value="GLUTAMYL-TRNA(GLN) AMIDOTRANSFERASE SUBUNIT A, MITOCHONDRIAL"/>
    <property type="match status" value="1"/>
</dbReference>
<dbReference type="PANTHER" id="PTHR11895">
    <property type="entry name" value="TRANSAMIDASE"/>
    <property type="match status" value="1"/>
</dbReference>
<dbReference type="Pfam" id="PF01425">
    <property type="entry name" value="Amidase"/>
    <property type="match status" value="1"/>
</dbReference>
<dbReference type="SUPFAM" id="SSF75304">
    <property type="entry name" value="Amidase signature (AS) enzymes"/>
    <property type="match status" value="1"/>
</dbReference>
<dbReference type="PROSITE" id="PS00571">
    <property type="entry name" value="AMIDASES"/>
    <property type="match status" value="1"/>
</dbReference>
<reference key="1">
    <citation type="submission" date="2000-01" db="EMBL/GenBank/DDBJ databases">
        <title>Cloning and characterization of Glu-ADT from Arabidopsis thaliana.</title>
        <authorList>
            <person name="Chang W."/>
            <person name="Soll D."/>
        </authorList>
    </citation>
    <scope>NUCLEOTIDE SEQUENCE [MRNA]</scope>
</reference>
<reference key="2">
    <citation type="journal article" date="2000" name="DNA Res.">
        <title>Structural analysis of Arabidopsis thaliana chromosome 3. II. Sequence features of the 4,251,695 bp regions covered by 90 P1, TAC and BAC clones.</title>
        <authorList>
            <person name="Kaneko T."/>
            <person name="Katoh T."/>
            <person name="Sato S."/>
            <person name="Nakamura Y."/>
            <person name="Asamizu E."/>
            <person name="Tabata S."/>
        </authorList>
    </citation>
    <scope>NUCLEOTIDE SEQUENCE [LARGE SCALE GENOMIC DNA]</scope>
    <source>
        <strain>cv. Columbia</strain>
    </source>
</reference>
<reference key="3">
    <citation type="journal article" date="2017" name="Plant J.">
        <title>Araport11: a complete reannotation of the Arabidopsis thaliana reference genome.</title>
        <authorList>
            <person name="Cheng C.Y."/>
            <person name="Krishnakumar V."/>
            <person name="Chan A.P."/>
            <person name="Thibaud-Nissen F."/>
            <person name="Schobel S."/>
            <person name="Town C.D."/>
        </authorList>
    </citation>
    <scope>GENOME REANNOTATION</scope>
    <source>
        <strain>cv. Columbia</strain>
    </source>
</reference>
<reference key="4">
    <citation type="journal article" date="2003" name="Science">
        <title>Empirical analysis of transcriptional activity in the Arabidopsis genome.</title>
        <authorList>
            <person name="Yamada K."/>
            <person name="Lim J."/>
            <person name="Dale J.M."/>
            <person name="Chen H."/>
            <person name="Shinn P."/>
            <person name="Palm C.J."/>
            <person name="Southwick A.M."/>
            <person name="Wu H.C."/>
            <person name="Kim C.J."/>
            <person name="Nguyen M."/>
            <person name="Pham P.K."/>
            <person name="Cheuk R.F."/>
            <person name="Karlin-Newmann G."/>
            <person name="Liu S.X."/>
            <person name="Lam B."/>
            <person name="Sakano H."/>
            <person name="Wu T."/>
            <person name="Yu G."/>
            <person name="Miranda M."/>
            <person name="Quach H.L."/>
            <person name="Tripp M."/>
            <person name="Chang C.H."/>
            <person name="Lee J.M."/>
            <person name="Toriumi M.J."/>
            <person name="Chan M.M."/>
            <person name="Tang C.C."/>
            <person name="Onodera C.S."/>
            <person name="Deng J.M."/>
            <person name="Akiyama K."/>
            <person name="Ansari Y."/>
            <person name="Arakawa T."/>
            <person name="Banh J."/>
            <person name="Banno F."/>
            <person name="Bowser L."/>
            <person name="Brooks S.Y."/>
            <person name="Carninci P."/>
            <person name="Chao Q."/>
            <person name="Choy N."/>
            <person name="Enju A."/>
            <person name="Goldsmith A.D."/>
            <person name="Gurjal M."/>
            <person name="Hansen N.F."/>
            <person name="Hayashizaki Y."/>
            <person name="Johnson-Hopson C."/>
            <person name="Hsuan V.W."/>
            <person name="Iida K."/>
            <person name="Karnes M."/>
            <person name="Khan S."/>
            <person name="Koesema E."/>
            <person name="Ishida J."/>
            <person name="Jiang P.X."/>
            <person name="Jones T."/>
            <person name="Kawai J."/>
            <person name="Kamiya A."/>
            <person name="Meyers C."/>
            <person name="Nakajima M."/>
            <person name="Narusaka M."/>
            <person name="Seki M."/>
            <person name="Sakurai T."/>
            <person name="Satou M."/>
            <person name="Tamse R."/>
            <person name="Vaysberg M."/>
            <person name="Wallender E.K."/>
            <person name="Wong C."/>
            <person name="Yamamura Y."/>
            <person name="Yuan S."/>
            <person name="Shinozaki K."/>
            <person name="Davis R.W."/>
            <person name="Theologis A."/>
            <person name="Ecker J.R."/>
        </authorList>
    </citation>
    <scope>NUCLEOTIDE SEQUENCE [LARGE SCALE MRNA]</scope>
    <source>
        <strain>cv. Columbia</strain>
    </source>
</reference>
<reference key="5">
    <citation type="submission" date="2006-07" db="EMBL/GenBank/DDBJ databases">
        <title>Large-scale analysis of RIKEN Arabidopsis full-length (RAFL) cDNAs.</title>
        <authorList>
            <person name="Totoki Y."/>
            <person name="Seki M."/>
            <person name="Ishida J."/>
            <person name="Nakajima M."/>
            <person name="Enju A."/>
            <person name="Kamiya A."/>
            <person name="Narusaka M."/>
            <person name="Shin-i T."/>
            <person name="Nakagawa M."/>
            <person name="Sakamoto N."/>
            <person name="Oishi K."/>
            <person name="Kohara Y."/>
            <person name="Kobayashi M."/>
            <person name="Toyoda A."/>
            <person name="Sakaki Y."/>
            <person name="Sakurai T."/>
            <person name="Iida K."/>
            <person name="Akiyama K."/>
            <person name="Satou M."/>
            <person name="Toyoda T."/>
            <person name="Konagaya A."/>
            <person name="Carninci P."/>
            <person name="Kawai J."/>
            <person name="Hayashizaki Y."/>
            <person name="Shinozaki K."/>
        </authorList>
    </citation>
    <scope>NUCLEOTIDE SEQUENCE [LARGE SCALE MRNA]</scope>
    <source>
        <strain>cv. Columbia</strain>
    </source>
</reference>
<reference key="6">
    <citation type="journal article" date="2008" name="Proc. Natl. Acad. Sci. U.S.A.">
        <title>Dual-targeted tRNA-dependent amidotransferase ensures both mitochondrial and chloroplastic Gln-tRNAGln synthesis in plants.</title>
        <authorList>
            <person name="Pujol C."/>
            <person name="Bailly M."/>
            <person name="Kern D."/>
            <person name="Marechal-Drouard L."/>
            <person name="Becker H."/>
            <person name="Duchene A.-M."/>
        </authorList>
    </citation>
    <scope>FUNCTION</scope>
    <scope>SUBCELLULAR LOCATION</scope>
</reference>
<proteinExistence type="evidence at transcript level"/>
<comment type="function">
    <text evidence="1 2">Allows the formation of correctly charged Gln-tRNA(Gln) through the transamidation of misacylated Glu-tRNA(Gln) in chloroplasts and mitochondria. The reaction takes place in the presence of glutamine and ATP through an activated gamma-phospho-Glu-tRNA(Gln).</text>
</comment>
<comment type="catalytic activity">
    <reaction evidence="1">
        <text>L-glutamyl-tRNA(Gln) + L-glutamine + ATP + H2O = L-glutaminyl-tRNA(Gln) + L-glutamate + ADP + phosphate + H(+)</text>
        <dbReference type="Rhea" id="RHEA:17521"/>
        <dbReference type="Rhea" id="RHEA-COMP:9681"/>
        <dbReference type="Rhea" id="RHEA-COMP:9684"/>
        <dbReference type="ChEBI" id="CHEBI:15377"/>
        <dbReference type="ChEBI" id="CHEBI:15378"/>
        <dbReference type="ChEBI" id="CHEBI:29985"/>
        <dbReference type="ChEBI" id="CHEBI:30616"/>
        <dbReference type="ChEBI" id="CHEBI:43474"/>
        <dbReference type="ChEBI" id="CHEBI:58359"/>
        <dbReference type="ChEBI" id="CHEBI:78520"/>
        <dbReference type="ChEBI" id="CHEBI:78521"/>
        <dbReference type="ChEBI" id="CHEBI:456216"/>
        <dbReference type="EC" id="6.3.5.7"/>
    </reaction>
</comment>
<comment type="subunit">
    <text evidence="1">Subunit of the heterotrimeric GatCAB amidotransferase (AdT) complex, composed of A, B and C subunits.</text>
</comment>
<comment type="subcellular location">
    <subcellularLocation>
        <location>Mitochondrion</location>
    </subcellularLocation>
    <subcellularLocation>
        <location>Plastid</location>
        <location>Chloroplast stroma</location>
    </subcellularLocation>
</comment>
<comment type="miscellaneous">
    <text evidence="1">This protein may be expected to contain an N-terminal transit peptide but none has been predicted.</text>
</comment>
<comment type="similarity">
    <text evidence="1">Belongs to the amidase family. GatA subfamily.</text>
</comment>
<accession>Q9LI77</accession>
<accession>Q9FVA6</accession>
<evidence type="ECO:0000255" key="1">
    <source>
        <dbReference type="HAMAP-Rule" id="MF_03150"/>
    </source>
</evidence>
<evidence type="ECO:0000269" key="2">
    <source>
    </source>
</evidence>
<evidence type="ECO:0000305" key="3"/>
<sequence length="537" mass="57181">MLSTLQPPRSLSLLPLRRFQISKTIVSAASSKTIDTSVISPPQSQILTTRRSLLSGETTAVEIAKSYLSRIRLTEPQLKCFLHVSENVLKDAQEIDQRIAKGEELGPLAGVLIGVKDNICTQGMPSTAASRILEHYRPPFDATAVKKIKELGGIVVGKTNMDEFGMGSTTEASAFQVTANPWDLSRVPGGSSGGSAAAVAARQCMVSLGSDTGGSVRQPASFCGVVGLKPTYGRVSRFGLMAYASSLDVIGCFGSTVADAGMLLHAISGYDRFDSTSSKQDVPEFQSQFLSVDHFESKPLNGVKVGIIRETLEDGVDSGVRSATQEAASHLEALGCILTEVSLPSFSLGLPAYYVIASSESSSNLSRYDGVRYGNQVMAEELNKLYECSRGEGFGGEVKMRILMGTYALSAGYYDAYYKRAQQVRTLIRKDFKAALEQNDILISPAAPSAAYKIGEKKDDPLAMYAGDIMTVNVNLAGLPAMVLPCGLVEGGPSGLPVGLQMIGAAFDEEKLLKVGHIFEQTLKGSSFVPPLLANVA</sequence>
<name>GATA_ARATH</name>
<gene>
    <name evidence="1" type="primary">GATA</name>
    <name type="ordered locus">At3g25660</name>
    <name type="ORF">T5M7.15</name>
</gene>
<keyword id="KW-0067">ATP-binding</keyword>
<keyword id="KW-0150">Chloroplast</keyword>
<keyword id="KW-0436">Ligase</keyword>
<keyword id="KW-0496">Mitochondrion</keyword>
<keyword id="KW-0547">Nucleotide-binding</keyword>
<keyword id="KW-0934">Plastid</keyword>
<keyword id="KW-0648">Protein biosynthesis</keyword>
<keyword id="KW-1185">Reference proteome</keyword>